<reference key="1">
    <citation type="journal article" date="2006" name="Nature">
        <title>The DNA sequence, annotation and analysis of human chromosome 3.</title>
        <authorList>
            <person name="Muzny D.M."/>
            <person name="Scherer S.E."/>
            <person name="Kaul R."/>
            <person name="Wang J."/>
            <person name="Yu J."/>
            <person name="Sudbrak R."/>
            <person name="Buhay C.J."/>
            <person name="Chen R."/>
            <person name="Cree A."/>
            <person name="Ding Y."/>
            <person name="Dugan-Rocha S."/>
            <person name="Gill R."/>
            <person name="Gunaratne P."/>
            <person name="Harris R.A."/>
            <person name="Hawes A.C."/>
            <person name="Hernandez J."/>
            <person name="Hodgson A.V."/>
            <person name="Hume J."/>
            <person name="Jackson A."/>
            <person name="Khan Z.M."/>
            <person name="Kovar-Smith C."/>
            <person name="Lewis L.R."/>
            <person name="Lozado R.J."/>
            <person name="Metzker M.L."/>
            <person name="Milosavljevic A."/>
            <person name="Miner G.R."/>
            <person name="Morgan M.B."/>
            <person name="Nazareth L.V."/>
            <person name="Scott G."/>
            <person name="Sodergren E."/>
            <person name="Song X.-Z."/>
            <person name="Steffen D."/>
            <person name="Wei S."/>
            <person name="Wheeler D.A."/>
            <person name="Wright M.W."/>
            <person name="Worley K.C."/>
            <person name="Yuan Y."/>
            <person name="Zhang Z."/>
            <person name="Adams C.Q."/>
            <person name="Ansari-Lari M.A."/>
            <person name="Ayele M."/>
            <person name="Brown M.J."/>
            <person name="Chen G."/>
            <person name="Chen Z."/>
            <person name="Clendenning J."/>
            <person name="Clerc-Blankenburg K.P."/>
            <person name="Chen R."/>
            <person name="Chen Z."/>
            <person name="Davis C."/>
            <person name="Delgado O."/>
            <person name="Dinh H.H."/>
            <person name="Dong W."/>
            <person name="Draper H."/>
            <person name="Ernst S."/>
            <person name="Fu G."/>
            <person name="Gonzalez-Garay M.L."/>
            <person name="Garcia D.K."/>
            <person name="Gillett W."/>
            <person name="Gu J."/>
            <person name="Hao B."/>
            <person name="Haugen E."/>
            <person name="Havlak P."/>
            <person name="He X."/>
            <person name="Hennig S."/>
            <person name="Hu S."/>
            <person name="Huang W."/>
            <person name="Jackson L.R."/>
            <person name="Jacob L.S."/>
            <person name="Kelly S.H."/>
            <person name="Kube M."/>
            <person name="Levy R."/>
            <person name="Li Z."/>
            <person name="Liu B."/>
            <person name="Liu J."/>
            <person name="Liu W."/>
            <person name="Lu J."/>
            <person name="Maheshwari M."/>
            <person name="Nguyen B.-V."/>
            <person name="Okwuonu G.O."/>
            <person name="Palmeiri A."/>
            <person name="Pasternak S."/>
            <person name="Perez L.M."/>
            <person name="Phelps K.A."/>
            <person name="Plopper F.J."/>
            <person name="Qiang B."/>
            <person name="Raymond C."/>
            <person name="Rodriguez R."/>
            <person name="Saenphimmachak C."/>
            <person name="Santibanez J."/>
            <person name="Shen H."/>
            <person name="Shen Y."/>
            <person name="Subramanian S."/>
            <person name="Tabor P.E."/>
            <person name="Verduzco D."/>
            <person name="Waldron L."/>
            <person name="Wang J."/>
            <person name="Wang J."/>
            <person name="Wang Q."/>
            <person name="Williams G.A."/>
            <person name="Wong G.K.-S."/>
            <person name="Yao Z."/>
            <person name="Zhang J."/>
            <person name="Zhang X."/>
            <person name="Zhao G."/>
            <person name="Zhou J."/>
            <person name="Zhou Y."/>
            <person name="Nelson D."/>
            <person name="Lehrach H."/>
            <person name="Reinhardt R."/>
            <person name="Naylor S.L."/>
            <person name="Yang H."/>
            <person name="Olson M."/>
            <person name="Weinstock G."/>
            <person name="Gibbs R.A."/>
        </authorList>
    </citation>
    <scope>NUCLEOTIDE SEQUENCE [LARGE SCALE GENOMIC DNA]</scope>
    <source>
        <tissue>Brain</tissue>
    </source>
</reference>
<reference key="2">
    <citation type="journal article" date="2004" name="Genome Res.">
        <title>The status, quality, and expansion of the NIH full-length cDNA project: the Mammalian Gene Collection (MGC).</title>
        <authorList>
            <consortium name="The MGC Project Team"/>
        </authorList>
    </citation>
    <scope>NUCLEOTIDE SEQUENCE [LARGE SCALE MRNA]</scope>
    <scope>VARIANT LEU-274</scope>
    <source>
        <tissue>Brain</tissue>
    </source>
</reference>
<reference key="3">
    <citation type="journal article" date="1995" name="DNA Res.">
        <title>Prediction of the coding sequences of unidentified human genes. III. The coding sequences of 40 new genes (KIAA0081-KIAA0120) deduced by analysis of cDNA clones from human cell line KG-1.</title>
        <authorList>
            <person name="Nagase T."/>
            <person name="Miyajima N."/>
            <person name="Tanaka A."/>
            <person name="Sazuka T."/>
            <person name="Seki N."/>
            <person name="Sato S."/>
            <person name="Tabata S."/>
            <person name="Ishikawa K."/>
            <person name="Kawarabayasi Y."/>
            <person name="Kotani H."/>
            <person name="Nomura N."/>
        </authorList>
    </citation>
    <scope>NUCLEOTIDE SEQUENCE [LARGE SCALE MRNA] OF 2-291</scope>
    <scope>VARIANT LEU-274</scope>
    <source>
        <tissue>Bone marrow</tissue>
    </source>
</reference>
<reference key="4">
    <citation type="submission" date="2008-12" db="UniProtKB">
        <authorList>
            <person name="Bienvenut W.V."/>
            <person name="Lilla S."/>
            <person name="von Kriegsheim A."/>
            <person name="Lempens A."/>
            <person name="Kolch W."/>
        </authorList>
    </citation>
    <scope>PROTEIN SEQUENCE OF 2-23</scope>
    <scope>CLEAVAGE OF INITIATOR METHIONINE</scope>
    <scope>ACETYLATION AT ALA-2</scope>
    <scope>IDENTIFICATION BY MASS SPECTROMETRY</scope>
    <source>
        <tissue>Ovarian carcinoma</tissue>
    </source>
</reference>
<reference key="5">
    <citation type="journal article" date="2001" name="Cell">
        <title>AU binding proteins recruit the exosome to degrade ARE-containing mRNAs.</title>
        <authorList>
            <person name="Chen C.-Y."/>
            <person name="Gherzi R."/>
            <person name="Ong S.-E."/>
            <person name="Chan E.L."/>
            <person name="Raijmakers R."/>
            <person name="Pruijn G.J.M."/>
            <person name="Stoecklin G."/>
            <person name="Moroni C."/>
            <person name="Mann M."/>
            <person name="Karin M."/>
        </authorList>
    </citation>
    <scope>IDENTIFICATION BY MASS SPECTROMETRY</scope>
    <scope>IDENTIFICATION IN THE RNA EXOSOME CORE COMPLEX</scope>
</reference>
<reference key="6">
    <citation type="journal article" date="2002" name="J. Mol. Biol.">
        <title>Protein-protein interactions between human exosome components support the assembly of RNase PH-type subunits into a six-membered PNPase-like ring.</title>
        <authorList>
            <person name="Raijmakers R."/>
            <person name="Vree Egberts W."/>
            <person name="van Venrooij W.J."/>
            <person name="Pruijn G.J.M."/>
        </authorList>
    </citation>
    <scope>PROTEIN INTERACTION</scope>
</reference>
<reference key="7">
    <citation type="journal article" date="2002" name="J. Mol. Biol.">
        <title>Protein-protein interactions of hCsl4p with other human exosome subunits.</title>
        <authorList>
            <person name="Raijmakers R."/>
            <person name="Noordman Y.E."/>
            <person name="van Venrooij W.J."/>
            <person name="Pruijn G.J.M."/>
        </authorList>
    </citation>
    <scope>SUBCELLULAR LOCATION</scope>
    <scope>INTERACTION WITH EXOSC1</scope>
</reference>
<reference key="8">
    <citation type="journal article" date="2004" name="Genome Res.">
        <title>A protein interaction framework for human mRNA degradation.</title>
        <authorList>
            <person name="Lehner B."/>
            <person name="Sanderson C.M."/>
        </authorList>
    </citation>
    <scope>PROTEIN INTERACTION</scope>
</reference>
<reference key="9">
    <citation type="journal article" date="2009" name="Anal. Chem.">
        <title>Lys-N and trypsin cover complementary parts of the phosphoproteome in a refined SCX-based approach.</title>
        <authorList>
            <person name="Gauci S."/>
            <person name="Helbig A.O."/>
            <person name="Slijper M."/>
            <person name="Krijgsveld J."/>
            <person name="Heck A.J."/>
            <person name="Mohammed S."/>
        </authorList>
    </citation>
    <scope>ACETYLATION [LARGE SCALE ANALYSIS] AT ALA-2</scope>
    <scope>CLEAVAGE OF INITIATOR METHIONINE [LARGE SCALE ANALYSIS]</scope>
    <scope>IDENTIFICATION BY MASS SPECTROMETRY [LARGE SCALE ANALYSIS]</scope>
</reference>
<reference key="10">
    <citation type="journal article" date="2009" name="Science">
        <title>Lysine acetylation targets protein complexes and co-regulates major cellular functions.</title>
        <authorList>
            <person name="Choudhary C."/>
            <person name="Kumar C."/>
            <person name="Gnad F."/>
            <person name="Nielsen M.L."/>
            <person name="Rehman M."/>
            <person name="Walther T.C."/>
            <person name="Olsen J.V."/>
            <person name="Mann M."/>
        </authorList>
    </citation>
    <scope>ACETYLATION [LARGE SCALE ANALYSIS] AT LYS-116</scope>
    <scope>IDENTIFICATION BY MASS SPECTROMETRY [LARGE SCALE ANALYSIS]</scope>
</reference>
<reference key="11">
    <citation type="journal article" date="2010" name="EMBO J.">
        <title>Dis3-like 1: a novel exoribonuclease associated with the human exosome.</title>
        <authorList>
            <person name="Staals R.H."/>
            <person name="Bronkhorst A.W."/>
            <person name="Schilders G."/>
            <person name="Slomovic S."/>
            <person name="Schuster G."/>
            <person name="Heck A.J."/>
            <person name="Raijmakers R."/>
            <person name="Pruijn G.J."/>
        </authorList>
    </citation>
    <scope>IDENTIFICATION IN THE RNA EXOSOME COMPLEX</scope>
    <scope>IDENTIFICATION BY MASS SPECTROMETRY</scope>
</reference>
<reference key="12">
    <citation type="journal article" date="2011" name="Proc. Natl. Acad. Sci. U.S.A.">
        <title>Zinc-finger antiviral protein inhibits HIV-1 infection by selectively targeting multiply spliced viral mRNAs for degradation.</title>
        <authorList>
            <person name="Zhu Y."/>
            <person name="Chen G."/>
            <person name="Lv F."/>
            <person name="Wang X."/>
            <person name="Ji X."/>
            <person name="Xu Y."/>
            <person name="Sun J."/>
            <person name="Wu L."/>
            <person name="Zheng Y.T."/>
            <person name="Gao G."/>
        </authorList>
    </citation>
    <scope>INTERACTION WITH ZC3HAV1</scope>
</reference>
<reference key="13">
    <citation type="journal article" date="2012" name="Mol. Cell. Proteomics">
        <title>Comparative large-scale characterisation of plant vs. mammal proteins reveals similar and idiosyncratic N-alpha acetylation features.</title>
        <authorList>
            <person name="Bienvenut W.V."/>
            <person name="Sumpton D."/>
            <person name="Martinez A."/>
            <person name="Lilla S."/>
            <person name="Espagne C."/>
            <person name="Meinnel T."/>
            <person name="Giglione C."/>
        </authorList>
    </citation>
    <scope>ACETYLATION [LARGE SCALE ANALYSIS] AT ALA-2</scope>
    <scope>CLEAVAGE OF INITIATOR METHIONINE [LARGE SCALE ANALYSIS]</scope>
    <scope>IDENTIFICATION BY MASS SPECTROMETRY [LARGE SCALE ANALYSIS]</scope>
</reference>
<reference key="14">
    <citation type="journal article" date="2013" name="J. Proteome Res.">
        <title>Toward a comprehensive characterization of a human cancer cell phosphoproteome.</title>
        <authorList>
            <person name="Zhou H."/>
            <person name="Di Palma S."/>
            <person name="Preisinger C."/>
            <person name="Peng M."/>
            <person name="Polat A.N."/>
            <person name="Heck A.J."/>
            <person name="Mohammed S."/>
        </authorList>
    </citation>
    <scope>PHOSPHORYLATION [LARGE SCALE ANALYSIS] AT SER-177</scope>
    <scope>IDENTIFICATION BY MASS SPECTROMETRY [LARGE SCALE ANALYSIS]</scope>
    <source>
        <tissue>Erythroleukemia</tissue>
    </source>
</reference>
<reference evidence="12" key="15">
    <citation type="journal article" date="2006" name="Cell">
        <title>Reconstitution, activities, and structure of the eukaryotic RNA exosome.</title>
        <authorList>
            <person name="Liu Q."/>
            <person name="Greimann J.C."/>
            <person name="Lima C.D."/>
        </authorList>
    </citation>
    <scope>X-RAY CRYSTALLOGRAPHY (3.35 ANGSTROMS)</scope>
    <scope>LACK OF CATALYTIC ACTIVITY</scope>
    <scope>RECONSTITUTION OF THE RNA EXOSOME CORE COMPLEX</scope>
</reference>
<reference key="16">
    <citation type="journal article" date="2007" name="Cell">
        <authorList>
            <person name="Liu Q."/>
            <person name="Greimann J.C."/>
            <person name="Lima C.D."/>
        </authorList>
    </citation>
    <scope>ERRATUM OF PUBMED:17174896</scope>
</reference>
<reference evidence="13 14" key="17">
    <citation type="journal article" date="2018" name="Cell">
        <title>Helicase-Dependent RNA Decay Illuminated by a Cryo-EM Structure of a Human Nuclear RNA Exosome-MTR4 Complex.</title>
        <authorList>
            <person name="Weick E.M."/>
            <person name="Puno M.R."/>
            <person name="Januszyk K."/>
            <person name="Zinder J.C."/>
            <person name="DiMattia M.A."/>
            <person name="Lima C.D."/>
        </authorList>
    </citation>
    <scope>STRUCTURE BY ELECTRON MICROSCOPY (3.45 ANGSTROMS)</scope>
    <scope>SUBUNIT</scope>
</reference>
<reference evidence="15" key="18">
    <citation type="journal article" date="2018" name="Elife">
        <title>Distinct and evolutionary conserved structural features of the human nuclear exosome complex.</title>
        <authorList>
            <person name="Gerlach P."/>
            <person name="Schuller J.M."/>
            <person name="Bonneau F."/>
            <person name="Basquin J."/>
            <person name="Reichelt P."/>
            <person name="Falk S."/>
            <person name="Conti E."/>
        </authorList>
    </citation>
    <scope>STRUCTURE BY ELECTRON MICROSCOPY (3.80 ANGSTROMS) OF THE RNA EXOSOME COMPLEX IN COMPLEX WITH MPP6</scope>
    <scope>SUBUNIT</scope>
</reference>
<reference key="19">
    <citation type="journal article" date="2011" name="BMC Syst. Biol.">
        <title>Initial characterization of the human central proteome.</title>
        <authorList>
            <person name="Burkard T.R."/>
            <person name="Planyavsky M."/>
            <person name="Kaupe I."/>
            <person name="Breitwieser F.P."/>
            <person name="Buerckstuemmer T."/>
            <person name="Bennett K.L."/>
            <person name="Superti-Furga G."/>
            <person name="Colinge J."/>
        </authorList>
    </citation>
    <scope>VARIANT [LARGE SCALE ANALYSIS] LEU-274</scope>
    <scope>IDENTIFICATION BY MASS SPECTROMETRY [LARGE SCALE ANALYSIS]</scope>
</reference>
<dbReference type="EMBL" id="AC104165">
    <property type="status" value="NOT_ANNOTATED_CDS"/>
    <property type="molecule type" value="Genomic_DNA"/>
</dbReference>
<dbReference type="EMBL" id="BC012831">
    <property type="protein sequence ID" value="AAH12831.1"/>
    <property type="molecule type" value="mRNA"/>
</dbReference>
<dbReference type="EMBL" id="D29958">
    <property type="protein sequence ID" value="BAA06226.1"/>
    <property type="molecule type" value="mRNA"/>
</dbReference>
<dbReference type="CCDS" id="CCDS2725.1"/>
<dbReference type="RefSeq" id="NP_055819.2">
    <property type="nucleotide sequence ID" value="NM_015004.4"/>
</dbReference>
<dbReference type="RefSeq" id="XP_047303704.1">
    <property type="nucleotide sequence ID" value="XM_047447748.1"/>
</dbReference>
<dbReference type="RefSeq" id="XP_054201727.1">
    <property type="nucleotide sequence ID" value="XM_054345752.1"/>
</dbReference>
<dbReference type="PDB" id="2NN6">
    <property type="method" value="X-ray"/>
    <property type="resolution" value="3.35 A"/>
    <property type="chains" value="E=1-291"/>
</dbReference>
<dbReference type="PDB" id="6D6Q">
    <property type="method" value="EM"/>
    <property type="resolution" value="3.45 A"/>
    <property type="chains" value="E=1-291"/>
</dbReference>
<dbReference type="PDB" id="6D6R">
    <property type="method" value="EM"/>
    <property type="resolution" value="3.45 A"/>
    <property type="chains" value="E=1-291"/>
</dbReference>
<dbReference type="PDB" id="6H25">
    <property type="method" value="EM"/>
    <property type="resolution" value="3.80 A"/>
    <property type="chains" value="E=1-291"/>
</dbReference>
<dbReference type="PDB" id="9G8M">
    <property type="method" value="EM"/>
    <property type="resolution" value="3.30 A"/>
    <property type="chains" value="F=1-291"/>
</dbReference>
<dbReference type="PDB" id="9G8N">
    <property type="method" value="EM"/>
    <property type="resolution" value="3.70 A"/>
    <property type="chains" value="F=1-291"/>
</dbReference>
<dbReference type="PDB" id="9G8O">
    <property type="method" value="EM"/>
    <property type="resolution" value="3.40 A"/>
    <property type="chains" value="F=1-291"/>
</dbReference>
<dbReference type="PDB" id="9G8P">
    <property type="method" value="EM"/>
    <property type="resolution" value="7.00 A"/>
    <property type="chains" value="F=1-291"/>
</dbReference>
<dbReference type="PDBsum" id="2NN6"/>
<dbReference type="PDBsum" id="6D6Q"/>
<dbReference type="PDBsum" id="6D6R"/>
<dbReference type="PDBsum" id="6H25"/>
<dbReference type="PDBsum" id="9G8M"/>
<dbReference type="PDBsum" id="9G8N"/>
<dbReference type="PDBsum" id="9G8O"/>
<dbReference type="PDBsum" id="9G8P"/>
<dbReference type="EMDB" id="EMD-0127"/>
<dbReference type="EMDB" id="EMD-0128"/>
<dbReference type="EMDB" id="EMD-14515"/>
<dbReference type="EMDB" id="EMD-51132"/>
<dbReference type="EMDB" id="EMD-51133"/>
<dbReference type="EMDB" id="EMD-51134"/>
<dbReference type="EMDB" id="EMD-51135"/>
<dbReference type="EMDB" id="EMD-7808"/>
<dbReference type="EMDB" id="EMD-7809"/>
<dbReference type="SMR" id="Q15024"/>
<dbReference type="BioGRID" id="116658">
    <property type="interactions" value="154"/>
</dbReference>
<dbReference type="ComplexPortal" id="CPX-476">
    <property type="entry name" value="Nuclear exosome complex, DIS3-EXOSC10 variant"/>
</dbReference>
<dbReference type="ComplexPortal" id="CPX-591">
    <property type="entry name" value="Nucleolar exosome complex, EXOSC10 variant"/>
</dbReference>
<dbReference type="ComplexPortal" id="CPX-592">
    <property type="entry name" value="Cytoplasmic exosome complex, DIS3L variant"/>
</dbReference>
<dbReference type="ComplexPortal" id="CPX-593">
    <property type="entry name" value="Exosome complex, DIS3 variant"/>
</dbReference>
<dbReference type="ComplexPortal" id="CPX-600">
    <property type="entry name" value="Cytoplasmic exosome complex, DIS3L-EXOSC10 variant"/>
</dbReference>
<dbReference type="CORUM" id="Q15024"/>
<dbReference type="DIP" id="DIP-31266N"/>
<dbReference type="FunCoup" id="Q15024">
    <property type="interactions" value="3455"/>
</dbReference>
<dbReference type="IntAct" id="Q15024">
    <property type="interactions" value="54"/>
</dbReference>
<dbReference type="MINT" id="Q15024"/>
<dbReference type="STRING" id="9606.ENSP00000265564"/>
<dbReference type="MoonDB" id="Q15024">
    <property type="type" value="Predicted"/>
</dbReference>
<dbReference type="GlyGen" id="Q15024">
    <property type="glycosylation" value="2 sites, 1 O-linked glycan (1 site)"/>
</dbReference>
<dbReference type="iPTMnet" id="Q15024"/>
<dbReference type="PhosphoSitePlus" id="Q15024"/>
<dbReference type="SwissPalm" id="Q15024"/>
<dbReference type="BioMuta" id="EXOSC7"/>
<dbReference type="DMDM" id="322510129"/>
<dbReference type="jPOST" id="Q15024"/>
<dbReference type="MassIVE" id="Q15024"/>
<dbReference type="PaxDb" id="9606-ENSP00000265564"/>
<dbReference type="PeptideAtlas" id="Q15024"/>
<dbReference type="ProteomicsDB" id="60375"/>
<dbReference type="Pumba" id="Q15024"/>
<dbReference type="Antibodypedia" id="12600">
    <property type="antibodies" value="308 antibodies from 27 providers"/>
</dbReference>
<dbReference type="DNASU" id="23016"/>
<dbReference type="Ensembl" id="ENST00000265564.8">
    <property type="protein sequence ID" value="ENSP00000265564.7"/>
    <property type="gene ID" value="ENSG00000075914.13"/>
</dbReference>
<dbReference type="GeneID" id="23016"/>
<dbReference type="KEGG" id="hsa:23016"/>
<dbReference type="MANE-Select" id="ENST00000265564.8">
    <property type="protein sequence ID" value="ENSP00000265564.7"/>
    <property type="RefSeq nucleotide sequence ID" value="NM_015004.4"/>
    <property type="RefSeq protein sequence ID" value="NP_055819.2"/>
</dbReference>
<dbReference type="UCSC" id="uc003coi.3">
    <property type="organism name" value="human"/>
</dbReference>
<dbReference type="AGR" id="HGNC:28112"/>
<dbReference type="CTD" id="23016"/>
<dbReference type="DisGeNET" id="23016"/>
<dbReference type="GeneCards" id="EXOSC7"/>
<dbReference type="HGNC" id="HGNC:28112">
    <property type="gene designation" value="EXOSC7"/>
</dbReference>
<dbReference type="HPA" id="ENSG00000075914">
    <property type="expression patterns" value="Low tissue specificity"/>
</dbReference>
<dbReference type="MIM" id="606488">
    <property type="type" value="gene"/>
</dbReference>
<dbReference type="neXtProt" id="NX_Q15024"/>
<dbReference type="OpenTargets" id="ENSG00000075914"/>
<dbReference type="PharmGKB" id="PA134880567"/>
<dbReference type="VEuPathDB" id="HostDB:ENSG00000075914"/>
<dbReference type="eggNOG" id="KOG1612">
    <property type="taxonomic scope" value="Eukaryota"/>
</dbReference>
<dbReference type="GeneTree" id="ENSGT00950000183130"/>
<dbReference type="HOGENOM" id="CLU_038194_4_0_1"/>
<dbReference type="InParanoid" id="Q15024"/>
<dbReference type="OMA" id="YNTRIPK"/>
<dbReference type="OrthoDB" id="272245at2759"/>
<dbReference type="PAN-GO" id="Q15024">
    <property type="GO annotations" value="12 GO annotations based on evolutionary models"/>
</dbReference>
<dbReference type="PhylomeDB" id="Q15024"/>
<dbReference type="TreeFam" id="TF320641"/>
<dbReference type="PathwayCommons" id="Q15024"/>
<dbReference type="Reactome" id="R-HSA-380994">
    <property type="pathway name" value="ATF4 activates genes in response to endoplasmic reticulum stress"/>
</dbReference>
<dbReference type="Reactome" id="R-HSA-429958">
    <property type="pathway name" value="mRNA decay by 3' to 5' exoribonuclease"/>
</dbReference>
<dbReference type="Reactome" id="R-HSA-450385">
    <property type="pathway name" value="Butyrate Response Factor 1 (BRF1) binds and destabilizes mRNA"/>
</dbReference>
<dbReference type="Reactome" id="R-HSA-450513">
    <property type="pathway name" value="Tristetraprolin (TTP, ZFP36) binds and destabilizes mRNA"/>
</dbReference>
<dbReference type="Reactome" id="R-HSA-450604">
    <property type="pathway name" value="KSRP (KHSRP) binds and destabilizes mRNA"/>
</dbReference>
<dbReference type="Reactome" id="R-HSA-6791226">
    <property type="pathway name" value="Major pathway of rRNA processing in the nucleolus and cytosol"/>
</dbReference>
<dbReference type="SignaLink" id="Q15024"/>
<dbReference type="SIGNOR" id="Q15024"/>
<dbReference type="BioGRID-ORCS" id="23016">
    <property type="hits" value="769 hits in 1163 CRISPR screens"/>
</dbReference>
<dbReference type="CD-CODE" id="91857CE7">
    <property type="entry name" value="Nucleolus"/>
</dbReference>
<dbReference type="ChiTaRS" id="EXOSC7">
    <property type="organism name" value="human"/>
</dbReference>
<dbReference type="EvolutionaryTrace" id="Q15024"/>
<dbReference type="GenomeRNAi" id="23016"/>
<dbReference type="Pharos" id="Q15024">
    <property type="development level" value="Tbio"/>
</dbReference>
<dbReference type="PRO" id="PR:Q15024"/>
<dbReference type="Proteomes" id="UP000005640">
    <property type="component" value="Chromosome 3"/>
</dbReference>
<dbReference type="RNAct" id="Q15024">
    <property type="molecule type" value="protein"/>
</dbReference>
<dbReference type="Bgee" id="ENSG00000075914">
    <property type="expression patterns" value="Expressed in oocyte and 213 other cell types or tissues"/>
</dbReference>
<dbReference type="ExpressionAtlas" id="Q15024">
    <property type="expression patterns" value="baseline and differential"/>
</dbReference>
<dbReference type="GO" id="GO:0000177">
    <property type="term" value="C:cytoplasmic exosome (RNase complex)"/>
    <property type="evidence" value="ECO:0000318"/>
    <property type="project" value="GO_Central"/>
</dbReference>
<dbReference type="GO" id="GO:0005829">
    <property type="term" value="C:cytosol"/>
    <property type="evidence" value="ECO:0000314"/>
    <property type="project" value="ComplexPortal"/>
</dbReference>
<dbReference type="GO" id="GO:0000178">
    <property type="term" value="C:exosome (RNase complex)"/>
    <property type="evidence" value="ECO:0000314"/>
    <property type="project" value="UniProtKB"/>
</dbReference>
<dbReference type="GO" id="GO:0000176">
    <property type="term" value="C:nuclear exosome (RNase complex)"/>
    <property type="evidence" value="ECO:0000318"/>
    <property type="project" value="GO_Central"/>
</dbReference>
<dbReference type="GO" id="GO:0101019">
    <property type="term" value="C:nucleolar exosome (RNase complex)"/>
    <property type="evidence" value="ECO:0000303"/>
    <property type="project" value="ComplexPortal"/>
</dbReference>
<dbReference type="GO" id="GO:0005730">
    <property type="term" value="C:nucleolus"/>
    <property type="evidence" value="ECO:0000314"/>
    <property type="project" value="ComplexPortal"/>
</dbReference>
<dbReference type="GO" id="GO:0005654">
    <property type="term" value="C:nucleoplasm"/>
    <property type="evidence" value="ECO:0000304"/>
    <property type="project" value="Reactome"/>
</dbReference>
<dbReference type="GO" id="GO:0005634">
    <property type="term" value="C:nucleus"/>
    <property type="evidence" value="ECO:0000314"/>
    <property type="project" value="ComplexPortal"/>
</dbReference>
<dbReference type="GO" id="GO:0000175">
    <property type="term" value="F:3'-5'-RNA exonuclease activity"/>
    <property type="evidence" value="ECO:0000304"/>
    <property type="project" value="UniProtKB"/>
</dbReference>
<dbReference type="GO" id="GO:0035925">
    <property type="term" value="F:mRNA 3'-UTR AU-rich region binding"/>
    <property type="evidence" value="ECO:0000318"/>
    <property type="project" value="GO_Central"/>
</dbReference>
<dbReference type="GO" id="GO:0003723">
    <property type="term" value="F:RNA binding"/>
    <property type="evidence" value="ECO:0000304"/>
    <property type="project" value="UniProtKB"/>
</dbReference>
<dbReference type="GO" id="GO:0000467">
    <property type="term" value="P:exonucleolytic trimming to generate mature 3'-end of 5.8S rRNA from tricistronic rRNA transcript (SSU-rRNA, 5.8S rRNA, LSU-rRNA)"/>
    <property type="evidence" value="ECO:0000318"/>
    <property type="project" value="GO_Central"/>
</dbReference>
<dbReference type="GO" id="GO:0071028">
    <property type="term" value="P:nuclear mRNA surveillance"/>
    <property type="evidence" value="ECO:0000318"/>
    <property type="project" value="GO_Central"/>
</dbReference>
<dbReference type="GO" id="GO:0071035">
    <property type="term" value="P:nuclear polyadenylation-dependent rRNA catabolic process"/>
    <property type="evidence" value="ECO:0000318"/>
    <property type="project" value="GO_Central"/>
</dbReference>
<dbReference type="GO" id="GO:0006401">
    <property type="term" value="P:RNA catabolic process"/>
    <property type="evidence" value="ECO:0000314"/>
    <property type="project" value="ComplexPortal"/>
</dbReference>
<dbReference type="GO" id="GO:0006396">
    <property type="term" value="P:RNA processing"/>
    <property type="evidence" value="ECO:0000314"/>
    <property type="project" value="ComplexPortal"/>
</dbReference>
<dbReference type="GO" id="GO:0016075">
    <property type="term" value="P:rRNA catabolic process"/>
    <property type="evidence" value="ECO:0000318"/>
    <property type="project" value="GO_Central"/>
</dbReference>
<dbReference type="GO" id="GO:0006364">
    <property type="term" value="P:rRNA processing"/>
    <property type="evidence" value="ECO:0000304"/>
    <property type="project" value="UniProtKB"/>
</dbReference>
<dbReference type="GO" id="GO:0071038">
    <property type="term" value="P:TRAMP-dependent tRNA surveillance pathway"/>
    <property type="evidence" value="ECO:0000318"/>
    <property type="project" value="GO_Central"/>
</dbReference>
<dbReference type="GO" id="GO:0034473">
    <property type="term" value="P:U1 snRNA 3'-end processing"/>
    <property type="evidence" value="ECO:0000318"/>
    <property type="project" value="GO_Central"/>
</dbReference>
<dbReference type="GO" id="GO:0034475">
    <property type="term" value="P:U4 snRNA 3'-end processing"/>
    <property type="evidence" value="ECO:0000318"/>
    <property type="project" value="GO_Central"/>
</dbReference>
<dbReference type="GO" id="GO:0034476">
    <property type="term" value="P:U5 snRNA 3'-end processing"/>
    <property type="evidence" value="ECO:0000318"/>
    <property type="project" value="GO_Central"/>
</dbReference>
<dbReference type="CDD" id="cd11367">
    <property type="entry name" value="RNase_PH_RRP42"/>
    <property type="match status" value="1"/>
</dbReference>
<dbReference type="FunFam" id="3.30.230.70:FF:000009">
    <property type="entry name" value="Exosome complex component RRP42"/>
    <property type="match status" value="1"/>
</dbReference>
<dbReference type="Gene3D" id="3.30.230.70">
    <property type="entry name" value="GHMP Kinase, N-terminal domain"/>
    <property type="match status" value="1"/>
</dbReference>
<dbReference type="InterPro" id="IPR001247">
    <property type="entry name" value="ExoRNase_PH_dom1"/>
</dbReference>
<dbReference type="InterPro" id="IPR015847">
    <property type="entry name" value="ExoRNase_PH_dom2"/>
</dbReference>
<dbReference type="InterPro" id="IPR036345">
    <property type="entry name" value="ExoRNase_PH_dom2_sf"/>
</dbReference>
<dbReference type="InterPro" id="IPR050590">
    <property type="entry name" value="Exosome_comp_Rrp42_subfam"/>
</dbReference>
<dbReference type="InterPro" id="IPR027408">
    <property type="entry name" value="PNPase/RNase_PH_dom_sf"/>
</dbReference>
<dbReference type="InterPro" id="IPR020568">
    <property type="entry name" value="Ribosomal_Su5_D2-typ_SF"/>
</dbReference>
<dbReference type="PANTHER" id="PTHR11097:SF8">
    <property type="entry name" value="EXOSOME COMPLEX COMPONENT RRP42"/>
    <property type="match status" value="1"/>
</dbReference>
<dbReference type="PANTHER" id="PTHR11097">
    <property type="entry name" value="EXOSOME COMPLEX EXONUCLEASE RIBOSOMAL RNA PROCESSING PROTEIN"/>
    <property type="match status" value="1"/>
</dbReference>
<dbReference type="Pfam" id="PF01138">
    <property type="entry name" value="RNase_PH"/>
    <property type="match status" value="1"/>
</dbReference>
<dbReference type="Pfam" id="PF03725">
    <property type="entry name" value="RNase_PH_C"/>
    <property type="match status" value="1"/>
</dbReference>
<dbReference type="SUPFAM" id="SSF55666">
    <property type="entry name" value="Ribonuclease PH domain 2-like"/>
    <property type="match status" value="1"/>
</dbReference>
<dbReference type="SUPFAM" id="SSF54211">
    <property type="entry name" value="Ribosomal protein S5 domain 2-like"/>
    <property type="match status" value="1"/>
</dbReference>
<keyword id="KW-0002">3D-structure</keyword>
<keyword id="KW-0007">Acetylation</keyword>
<keyword id="KW-0963">Cytoplasm</keyword>
<keyword id="KW-0903">Direct protein sequencing</keyword>
<keyword id="KW-0271">Exosome</keyword>
<keyword id="KW-0539">Nucleus</keyword>
<keyword id="KW-0597">Phosphoprotein</keyword>
<keyword id="KW-1267">Proteomics identification</keyword>
<keyword id="KW-1185">Reference proteome</keyword>
<keyword id="KW-0694">RNA-binding</keyword>
<keyword id="KW-0698">rRNA processing</keyword>
<sequence>MASVTLSEAEKVYIVHGVQEDLRVDGRGCEDYRCVEVETDVVSNTSGSARVKLGHTDILVGVKAEMGTPKLEKPNEGYLEFFVDCSASATPEFEGRGGDDLGTEIANTLYRIFNNKSSVDLKTLCISPREHCWVLYVDVLLLECGGNLFDAISIAVKAALFNTRIPRVRVLEDEEGSKDIELSDDPYDCIRLSVENVPCIVTLCKIGYRHVVDATLQEEACSLASLLVSVTSKGVVTCMRKVGKGSLDPESIFEMMETGKRVGKVLHASLQSVVHKEESLGPKRQKVGFLG</sequence>
<feature type="initiator methionine" description="Removed" evidence="9 16 19">
    <location>
        <position position="1"/>
    </location>
</feature>
<feature type="chain" id="PRO_0000139963" description="Exosome complex component RRP42">
    <location>
        <begin position="2"/>
        <end position="291"/>
    </location>
</feature>
<feature type="modified residue" description="N-acetylalanine" evidence="9 16 19">
    <location>
        <position position="2"/>
    </location>
</feature>
<feature type="modified residue" description="N6-acetyllysine" evidence="17">
    <location>
        <position position="116"/>
    </location>
</feature>
<feature type="modified residue" description="Phosphoserine" evidence="20">
    <location>
        <position position="177"/>
    </location>
</feature>
<feature type="sequence variant" id="VAR_032765" description="In dbSNP:rs34512144.">
    <original>R</original>
    <variation>Q</variation>
    <location>
        <position position="169"/>
    </location>
</feature>
<feature type="sequence variant" id="VAR_014923" description="In dbSNP:rs6794." evidence="3 8 18">
    <original>V</original>
    <variation>L</variation>
    <location>
        <position position="274"/>
    </location>
</feature>
<feature type="helix" evidence="21">
    <location>
        <begin position="8"/>
        <end position="19"/>
    </location>
</feature>
<feature type="strand" evidence="21">
    <location>
        <begin position="24"/>
        <end position="26"/>
    </location>
</feature>
<feature type="strand" evidence="21">
    <location>
        <begin position="36"/>
        <end position="39"/>
    </location>
</feature>
<feature type="strand" evidence="21">
    <location>
        <begin position="45"/>
        <end position="53"/>
    </location>
</feature>
<feature type="strand" evidence="21">
    <location>
        <begin position="56"/>
        <end position="61"/>
    </location>
</feature>
<feature type="strand" evidence="21">
    <location>
        <begin position="71"/>
        <end position="73"/>
    </location>
</feature>
<feature type="strand" evidence="21">
    <location>
        <begin position="79"/>
        <end position="82"/>
    </location>
</feature>
<feature type="turn" evidence="21">
    <location>
        <begin position="87"/>
        <end position="89"/>
    </location>
</feature>
<feature type="turn" evidence="22">
    <location>
        <begin position="95"/>
        <end position="97"/>
    </location>
</feature>
<feature type="helix" evidence="21">
    <location>
        <begin position="99"/>
        <end position="115"/>
    </location>
</feature>
<feature type="strand" evidence="22">
    <location>
        <begin position="116"/>
        <end position="119"/>
    </location>
</feature>
<feature type="strand" evidence="21">
    <location>
        <begin position="121"/>
        <end position="124"/>
    </location>
</feature>
<feature type="strand" evidence="22">
    <location>
        <begin position="125"/>
        <end position="127"/>
    </location>
</feature>
<feature type="turn" evidence="21">
    <location>
        <begin position="128"/>
        <end position="130"/>
    </location>
</feature>
<feature type="strand" evidence="21">
    <location>
        <begin position="135"/>
        <end position="141"/>
    </location>
</feature>
<feature type="helix" evidence="21">
    <location>
        <begin position="148"/>
        <end position="158"/>
    </location>
</feature>
<feature type="turn" evidence="21">
    <location>
        <begin position="159"/>
        <end position="162"/>
    </location>
</feature>
<feature type="strand" evidence="21">
    <location>
        <begin position="167"/>
        <end position="171"/>
    </location>
</feature>
<feature type="turn" evidence="22">
    <location>
        <begin position="174"/>
        <end position="176"/>
    </location>
</feature>
<feature type="strand" evidence="21">
    <location>
        <begin position="180"/>
        <end position="186"/>
    </location>
</feature>
<feature type="strand" evidence="22">
    <location>
        <begin position="188"/>
        <end position="190"/>
    </location>
</feature>
<feature type="strand" evidence="21">
    <location>
        <begin position="201"/>
        <end position="213"/>
    </location>
</feature>
<feature type="helix" evidence="21">
    <location>
        <begin position="216"/>
        <end position="219"/>
    </location>
</feature>
<feature type="strand" evidence="21">
    <location>
        <begin position="223"/>
        <end position="228"/>
    </location>
</feature>
<feature type="strand" evidence="21">
    <location>
        <begin position="232"/>
        <end position="234"/>
    </location>
</feature>
<feature type="strand" evidence="21">
    <location>
        <begin position="238"/>
        <end position="245"/>
    </location>
</feature>
<feature type="helix" evidence="21">
    <location>
        <begin position="249"/>
        <end position="278"/>
    </location>
</feature>
<feature type="helix" evidence="22">
    <location>
        <begin position="282"/>
        <end position="284"/>
    </location>
</feature>
<proteinExistence type="evidence at protein level"/>
<name>EXOS7_HUMAN</name>
<gene>
    <name type="primary">EXOSC7</name>
    <name type="synonym">KIAA0116</name>
    <name type="synonym">RRP42</name>
</gene>
<protein>
    <recommendedName>
        <fullName>Exosome complex component RRP42</fullName>
    </recommendedName>
    <alternativeName>
        <fullName>Exosome component 7</fullName>
    </alternativeName>
    <alternativeName>
        <fullName>Ribosomal RNA-processing protein 42</fullName>
    </alternativeName>
    <alternativeName>
        <fullName>p8</fullName>
    </alternativeName>
</protein>
<evidence type="ECO:0000269" key="1">
    <source>
    </source>
</evidence>
<evidence type="ECO:0000269" key="2">
    <source>
    </source>
</evidence>
<evidence type="ECO:0000269" key="3">
    <source>
    </source>
</evidence>
<evidence type="ECO:0000269" key="4">
    <source>
    </source>
</evidence>
<evidence type="ECO:0000269" key="5">
    <source>
    </source>
</evidence>
<evidence type="ECO:0000269" key="6">
    <source>
    </source>
</evidence>
<evidence type="ECO:0000269" key="7">
    <source>
    </source>
</evidence>
<evidence type="ECO:0000269" key="8">
    <source>
    </source>
</evidence>
<evidence type="ECO:0000269" key="9">
    <source ref="4"/>
</evidence>
<evidence type="ECO:0000305" key="10"/>
<evidence type="ECO:0000305" key="11">
    <source>
    </source>
</evidence>
<evidence type="ECO:0007744" key="12">
    <source>
        <dbReference type="PDB" id="2NN6"/>
    </source>
</evidence>
<evidence type="ECO:0007744" key="13">
    <source>
        <dbReference type="PDB" id="6D6Q"/>
    </source>
</evidence>
<evidence type="ECO:0007744" key="14">
    <source>
        <dbReference type="PDB" id="6D6R"/>
    </source>
</evidence>
<evidence type="ECO:0007744" key="15">
    <source>
        <dbReference type="PDB" id="6H25"/>
    </source>
</evidence>
<evidence type="ECO:0007744" key="16">
    <source>
    </source>
</evidence>
<evidence type="ECO:0007744" key="17">
    <source>
    </source>
</evidence>
<evidence type="ECO:0007744" key="18">
    <source>
    </source>
</evidence>
<evidence type="ECO:0007744" key="19">
    <source>
    </source>
</evidence>
<evidence type="ECO:0007744" key="20">
    <source>
    </source>
</evidence>
<evidence type="ECO:0007829" key="21">
    <source>
        <dbReference type="PDB" id="2NN6"/>
    </source>
</evidence>
<evidence type="ECO:0007829" key="22">
    <source>
        <dbReference type="PDB" id="6D6Q"/>
    </source>
</evidence>
<organism>
    <name type="scientific">Homo sapiens</name>
    <name type="common">Human</name>
    <dbReference type="NCBI Taxonomy" id="9606"/>
    <lineage>
        <taxon>Eukaryota</taxon>
        <taxon>Metazoa</taxon>
        <taxon>Chordata</taxon>
        <taxon>Craniata</taxon>
        <taxon>Vertebrata</taxon>
        <taxon>Euteleostomi</taxon>
        <taxon>Mammalia</taxon>
        <taxon>Eutheria</taxon>
        <taxon>Euarchontoglires</taxon>
        <taxon>Primates</taxon>
        <taxon>Haplorrhini</taxon>
        <taxon>Catarrhini</taxon>
        <taxon>Hominidae</taxon>
        <taxon>Homo</taxon>
    </lineage>
</organism>
<comment type="function">
    <text>Non-catalytic component of the RNA exosome complex which has 3'-&gt;5' exoribonuclease activity and participates in a multitude of cellular RNA processing and degradation events. In the nucleus, the RNA exosome complex is involved in proper maturation of stable RNA species such as rRNA, snRNA and snoRNA, in the elimination of RNA processing by-products and non-coding 'pervasive' transcripts, such as antisense RNA species and promoter-upstream transcripts (PROMPTs), and of mRNAs with processing defects, thereby limiting or excluding their export to the cytoplasm. The RNA exosome may be involved in Ig class switch recombination (CSR) and/or Ig variable region somatic hypermutation (SHM) by targeting AICDA deamination activity to transcribed dsDNA substrates. In the cytoplasm, the RNA exosome complex is involved in general mRNA turnover and specifically degrades inherently unstable mRNAs containing AU-rich elements (AREs) within their 3' untranslated regions, and in RNA surveillance pathways, preventing translation of aberrant mRNAs. It seems to be involved in degradation of histone mRNA. The catalytic inactive RNA exosome core complex of 9 subunits (Exo-9) is proposed to play a pivotal role in the binding and presentation of RNA for ribonucleolysis, and to serve as a scaffold for the association with catalytic subunits and accessory proteins or complexes.</text>
</comment>
<comment type="subunit">
    <text evidence="1 4 5 6 7">Component of the RNA exosome core complex (Exo-9), composed of EXOSC1, EXOSC2, EXOSC3, EXOSC4, EXOSC5, EXOSC6, EXOSC7, EXOSC8 and EXOSC9; within the complex interacts with EXOSC2 and EXOSC4 (PubMed:29906447, PubMed:30047866). The catalytically inactive RNA exosome core complex (Exo-9) associates with the catalytic subunit EXOSC10/RRP6 (PubMed:11719186, PubMed:20531389, PubMed:29906447). Exo-9 may associate with DIS3 to form the nucleolar exosome complex, or DIS3L to form the cytoplasmic exosome complex (PubMed:11719186, PubMed:20531389, PubMed:29906447). Exo-9 is formed by a hexameric base ring consisting of the heterodimers EXOSC4-EXOSC9, EXOSC5-EXOSC8 and EXOSC6-EXOSC7, and a cap ring consisting of EXOSC1, EXOSC2 and EXOSC3 (PubMed:11719186, PubMed:20531389, PubMed:30047866). The RNA exosome complex associates with cofactors C1D/RRP47, MPHOSPH6/MPP6 and MTREX/MTR4 (PubMed:30047866). Interacts with ZC3HAV1 (PubMed:21876179). Interacts with DIS3; the interaction is direct (PubMed:30047866).</text>
</comment>
<comment type="interaction">
    <interactant intactId="EBI-371841">
        <id>Q15024</id>
    </interactant>
    <interactant intactId="EBI-12001340">
        <id>P62508-3</id>
        <label>ESRRG</label>
    </interactant>
    <organismsDiffer>false</organismsDiffer>
    <experiments>3</experiments>
</comment>
<comment type="interaction">
    <interactant intactId="EBI-371841">
        <id>Q15024</id>
    </interactant>
    <interactant intactId="EBI-371892">
        <id>Q9Y3B2</id>
        <label>EXOSC1</label>
    </interactant>
    <organismsDiffer>false</organismsDiffer>
    <experiments>12</experiments>
</comment>
<comment type="interaction">
    <interactant intactId="EBI-371841">
        <id>Q15024</id>
    </interactant>
    <interactant intactId="EBI-358236">
        <id>Q01780</id>
        <label>EXOSC10</label>
    </interactant>
    <organismsDiffer>false</organismsDiffer>
    <experiments>4</experiments>
</comment>
<comment type="interaction">
    <interactant intactId="EBI-371841">
        <id>Q15024</id>
    </interactant>
    <interactant intactId="EBI-301735">
        <id>Q13868</id>
        <label>EXOSC2</label>
    </interactant>
    <organismsDiffer>false</organismsDiffer>
    <experiments>9</experiments>
</comment>
<comment type="interaction">
    <interactant intactId="EBI-371841">
        <id>Q15024</id>
    </interactant>
    <interactant intactId="EBI-371823">
        <id>Q9NPD3</id>
        <label>EXOSC4</label>
    </interactant>
    <organismsDiffer>false</organismsDiffer>
    <experiments>8</experiments>
</comment>
<comment type="interaction">
    <interactant intactId="EBI-371841">
        <id>Q15024</id>
    </interactant>
    <interactant intactId="EBI-751911">
        <id>Q92551</id>
        <label>IP6K1</label>
    </interactant>
    <organismsDiffer>false</organismsDiffer>
    <experiments>6</experiments>
</comment>
<comment type="interaction">
    <interactant intactId="EBI-371841">
        <id>Q15024</id>
    </interactant>
    <interactant intactId="EBI-473850">
        <id>P61086</id>
        <label>UBE2K</label>
    </interactant>
    <organismsDiffer>false</organismsDiffer>
    <experiments>3</experiments>
</comment>
<comment type="subcellular location">
    <subcellularLocation>
        <location evidence="2">Nucleus</location>
        <location evidence="2">Nucleolus</location>
    </subcellularLocation>
    <subcellularLocation>
        <location evidence="11">Cytoplasm</location>
    </subcellularLocation>
    <subcellularLocation>
        <location evidence="11">Nucleus</location>
    </subcellularLocation>
</comment>
<comment type="similarity">
    <text evidence="10">Belongs to the RNase PH family.</text>
</comment>
<comment type="caution">
    <text evidence="10">The six exosome core subunits containing a RNase PH-domain are not phosphorolytically active.</text>
</comment>
<accession>Q15024</accession>
<accession>Q96E72</accession>